<proteinExistence type="inferred from homology"/>
<gene>
    <name type="primary">tpr</name>
    <name type="ordered locus">PG_1055</name>
</gene>
<reference key="1">
    <citation type="journal article" date="1992" name="Infect. Immun.">
        <title>Cloning, expression, and sequencing of a protease gene (tpr) from Porphyromonas gingivalis W83 in Escherichia coli.</title>
        <authorList>
            <person name="Bourgeau G."/>
            <person name="Lapointe H."/>
            <person name="Peloquin P."/>
            <person name="Mayrand D."/>
        </authorList>
    </citation>
    <scope>NUCLEOTIDE SEQUENCE [GENOMIC DNA]</scope>
    <source>
        <strain>ATCC BAA-308 / W83</strain>
    </source>
</reference>
<reference key="2">
    <citation type="journal article" date="2003" name="J. Bacteriol.">
        <title>Complete genome sequence of the oral pathogenic bacterium Porphyromonas gingivalis strain W83.</title>
        <authorList>
            <person name="Nelson K.E."/>
            <person name="Fleischmann R.D."/>
            <person name="DeBoy R.T."/>
            <person name="Paulsen I.T."/>
            <person name="Fouts D.E."/>
            <person name="Eisen J.A."/>
            <person name="Daugherty S.C."/>
            <person name="Dodson R.J."/>
            <person name="Durkin A.S."/>
            <person name="Gwinn M.L."/>
            <person name="Haft D.H."/>
            <person name="Kolonay J.F."/>
            <person name="Nelson W.C."/>
            <person name="Mason T.M."/>
            <person name="Tallon L."/>
            <person name="Gray J."/>
            <person name="Granger D."/>
            <person name="Tettelin H."/>
            <person name="Dong H."/>
            <person name="Galvin J.L."/>
            <person name="Duncan M.J."/>
            <person name="Dewhirst F.E."/>
            <person name="Fraser C.M."/>
        </authorList>
    </citation>
    <scope>NUCLEOTIDE SEQUENCE [LARGE SCALE GENOMIC DNA]</scope>
    <source>
        <strain>ATCC BAA-308 / W83</strain>
    </source>
</reference>
<accession>P25806</accession>
<name>TPR_PORGI</name>
<keyword id="KW-0378">Hydrolase</keyword>
<keyword id="KW-0645">Protease</keyword>
<keyword id="KW-1185">Reference proteome</keyword>
<keyword id="KW-0788">Thiol protease</keyword>
<keyword id="KW-0843">Virulence</keyword>
<feature type="chain" id="PRO_0000207747" description="Thiol protease">
    <location>
        <begin position="1"/>
        <end position="481"/>
    </location>
</feature>
<feature type="domain" description="Calpain catalytic" evidence="2">
    <location>
        <begin position="169"/>
        <end position="481"/>
    </location>
</feature>
<feature type="active site" evidence="1">
    <location>
        <position position="229"/>
    </location>
</feature>
<feature type="active site" evidence="1">
    <location>
        <position position="406"/>
    </location>
</feature>
<feature type="active site" evidence="1">
    <location>
        <position position="426"/>
    </location>
</feature>
<feature type="sequence conflict" description="In Ref. 1; AAA25652." evidence="3" ref="1">
    <original>A</original>
    <variation>AN</variation>
    <location>
        <position position="274"/>
    </location>
</feature>
<evidence type="ECO:0000250" key="1"/>
<evidence type="ECO:0000255" key="2">
    <source>
        <dbReference type="PROSITE-ProRule" id="PRU00239"/>
    </source>
</evidence>
<evidence type="ECO:0000305" key="3"/>
<protein>
    <recommendedName>
        <fullName>Thiol protease</fullName>
        <ecNumber>3.4.22.-</ecNumber>
    </recommendedName>
</protein>
<organism>
    <name type="scientific">Porphyromonas gingivalis (strain ATCC BAA-308 / W83)</name>
    <dbReference type="NCBI Taxonomy" id="242619"/>
    <lineage>
        <taxon>Bacteria</taxon>
        <taxon>Pseudomonadati</taxon>
        <taxon>Bacteroidota</taxon>
        <taxon>Bacteroidia</taxon>
        <taxon>Bacteroidales</taxon>
        <taxon>Porphyromonadaceae</taxon>
        <taxon>Porphyromonas</taxon>
    </lineage>
</organism>
<dbReference type="EC" id="3.4.22.-"/>
<dbReference type="EMBL" id="M84471">
    <property type="protein sequence ID" value="AAA25652.1"/>
    <property type="molecule type" value="Genomic_DNA"/>
</dbReference>
<dbReference type="EMBL" id="AE015924">
    <property type="protein sequence ID" value="AAQ66170.1"/>
    <property type="molecule type" value="Genomic_DNA"/>
</dbReference>
<dbReference type="PIR" id="S27608">
    <property type="entry name" value="S27608"/>
</dbReference>
<dbReference type="RefSeq" id="WP_005873455.1">
    <property type="nucleotide sequence ID" value="NC_002950.2"/>
</dbReference>
<dbReference type="SMR" id="P25806"/>
<dbReference type="STRING" id="242619.PG_1055"/>
<dbReference type="MEROPS" id="C02.022"/>
<dbReference type="EnsemblBacteria" id="AAQ66170">
    <property type="protein sequence ID" value="AAQ66170"/>
    <property type="gene ID" value="PG_1055"/>
</dbReference>
<dbReference type="KEGG" id="pgi:PG_1055"/>
<dbReference type="eggNOG" id="ENOG50343N4">
    <property type="taxonomic scope" value="Bacteria"/>
</dbReference>
<dbReference type="HOGENOM" id="CLU_039414_0_0_10"/>
<dbReference type="BRENDA" id="3.4.22.B8">
    <property type="organism ID" value="756"/>
</dbReference>
<dbReference type="Proteomes" id="UP000000588">
    <property type="component" value="Chromosome"/>
</dbReference>
<dbReference type="GO" id="GO:0004198">
    <property type="term" value="F:calcium-dependent cysteine-type endopeptidase activity"/>
    <property type="evidence" value="ECO:0007669"/>
    <property type="project" value="InterPro"/>
</dbReference>
<dbReference type="GO" id="GO:0006508">
    <property type="term" value="P:proteolysis"/>
    <property type="evidence" value="ECO:0007669"/>
    <property type="project" value="UniProtKB-KW"/>
</dbReference>
<dbReference type="CDD" id="cd00044">
    <property type="entry name" value="CysPc"/>
    <property type="match status" value="1"/>
</dbReference>
<dbReference type="Gene3D" id="3.90.70.10">
    <property type="entry name" value="Cysteine proteinases"/>
    <property type="match status" value="1"/>
</dbReference>
<dbReference type="InterPro" id="IPR038765">
    <property type="entry name" value="Papain-like_cys_pep_sf"/>
</dbReference>
<dbReference type="InterPro" id="IPR000169">
    <property type="entry name" value="Pept_cys_AS"/>
</dbReference>
<dbReference type="InterPro" id="IPR001300">
    <property type="entry name" value="Peptidase_C2_calpain_cat"/>
</dbReference>
<dbReference type="Pfam" id="PF00648">
    <property type="entry name" value="Peptidase_C2"/>
    <property type="match status" value="1"/>
</dbReference>
<dbReference type="SUPFAM" id="SSF54001">
    <property type="entry name" value="Cysteine proteinases"/>
    <property type="match status" value="1"/>
</dbReference>
<dbReference type="PROSITE" id="PS50203">
    <property type="entry name" value="CALPAIN_CAT"/>
    <property type="match status" value="1"/>
</dbReference>
<dbReference type="PROSITE" id="PS00139">
    <property type="entry name" value="THIOL_PROTEASE_CYS"/>
    <property type="match status" value="1"/>
</dbReference>
<sequence length="481" mass="54991">MEKKLVPQSISKERLQKLEAQATLTPQQEEAKARKIEREKARLKELNIPTESKESKDCSPAGMINPYALTEVILERPLDWSNPRTTDIVERVLGSSMQDLSKGDSVLRAGRDQNAEVKIVDSVLTKTQRGQDGLERILESFNDYDMPPEEKEEAAPKAKKAAQKLDIDDLREQALSSTTITKEISKIILPTKNLRDDNNTVHQYREVGFQSNGAHNLWDTVVQGIAGDCYMLAALSAIAWVWPALLNMDVDIMSNQDEWRLYRYFIGRSKQTYARPSGSGTSTNEILQEGYYKVPIFARSRYWFNGEYWPALFEQAYANWKFPNDSKYNAILQIGGGWPEEALCELSGDSWFTSSGKLMLSSFTDLSLLNFMKSMCYSWKTIKPMVIVTPCWEPLPPMMPGIAAYHAYTVLGYTVSNGAYYLIIRNPWGVTEPTGDGVLSKRDWVIHFDNMKWFNLSKDDGIFALRLDKVRENFWYIAYMY</sequence>
<comment type="function">
    <text>Thiol protease. Probably an important virulence factor.</text>
</comment>
<comment type="activity regulation">
    <text>Inactive below 20 degrees Celsius and pH 6.0. Inhibited by divalent cations.</text>
</comment>
<comment type="similarity">
    <text evidence="3">Belongs to the peptidase C2 family.</text>
</comment>